<sequence length="1176" mass="127819">MSLPNHSGSSAFKSFSYIVGTGIKRAAKLSTRNPIEMIVVVLILSSFSYFYLFNLARTSDIFSGTVTRLYPTSVYAPTKDHSFSVVDRTADSTIANNAVKVHLHQIVVSDPKHGVLSRQTLASVLRFQQMAENEIYVPDSTAVNRFAFNKDLCYKTTLPSSYSSHSSDSNSNSNLNSKTSPCFAHSPADIWQDEATLLADKNIRSTIEANLDTAKNVFGDLQLNATYASSVTLSYAFNTTGDYREHLADMWKHKVATLPPADLVSLSNIGQQENVFAWLFIVTRNVIFRVKELIDLADNIDIIVILVGYIMMIATFISLYVNMRAMGSRYTLATAVVFNGFFSFMLALLTVRALGVDVYPVVLAEAIPFLAVTIGFERPFKLTKRVFQFSKETPLTKQEIRTTIMRAVDTVALPIARDCFMEIIVLVLGAKSGISGLEEFCLLSAILLAYDFIIMFTWYTAVLALKLELLRIREINGISADDIKKGTKKSTGYIRRTVIKAFSDDHAAGANTANQKADGPIIGRVKLLMIVGFVVMHIFKFCSAFQSVGPQVNITEPSIAVVLDQLLEQHKASSQASLPLFVQVFPAMPFHVATVNKSFVPDAITRPLEALFDTYAVYIQHPVISKWLTIALFVSLFLNTYLFNVAKQPKQIVEQVNQDKKITNAIESTNNTHIEVTEKQKPTIQSPGPVVSSAVVMSPNHKRSHNHHHSHSHSHNHHSNHHQSDIVRPIDECVALVRTPEMLNDEEVISLVENGKMASYALEKVLGDLQRAVGIRRALISRASITKTLEASALPLENYHYDKVMGACCENVIGYMPIPVGVAGPMNIDGDLIHIPMATTEGCLVASTARGCKAINAGGGASTIVIADGMTRGPCVEFPTILRAAACKLWIENEGNDIVTNAFNSTSRFARLRKLKIALAGKLVFIRFSTTTGDAMGMNMISKGCEKALSIITEHFPDMQIISLSGNYCTDKKPAAINWIEGRGKSVVTEAVIPGAIVEKVLKTTVAALVELNISKNLIGSAMAGSVGGFNAHAANILTAIYLATGQDPAQNVESSNCITLMKAVNDTKDLHISCTMPSIEVGTIGGGTILPPQQSMLDMLGVRGPHPTEPGKNAQRLARIICAAVMAGELSLCAALAAGHLVKAHMAHNRGTQAPTITSGPAPSTGTEPGTCIKS</sequence>
<evidence type="ECO:0000250" key="1">
    <source>
        <dbReference type="UniProtKB" id="P04035"/>
    </source>
</evidence>
<evidence type="ECO:0000250" key="2">
    <source>
        <dbReference type="UniProtKB" id="P12684"/>
    </source>
</evidence>
<evidence type="ECO:0000250" key="3">
    <source>
        <dbReference type="UniProtKB" id="Q4WHZ1"/>
    </source>
</evidence>
<evidence type="ECO:0000255" key="4"/>
<evidence type="ECO:0000255" key="5">
    <source>
        <dbReference type="PROSITE-ProRule" id="PRU00199"/>
    </source>
</evidence>
<evidence type="ECO:0000255" key="6">
    <source>
        <dbReference type="PROSITE-ProRule" id="PRU10003"/>
    </source>
</evidence>
<evidence type="ECO:0000256" key="7">
    <source>
        <dbReference type="SAM" id="MobiDB-lite"/>
    </source>
</evidence>
<evidence type="ECO:0000303" key="8">
    <source ref="2"/>
</evidence>
<evidence type="ECO:0000305" key="9"/>
<evidence type="ECO:0000305" key="10">
    <source ref="2"/>
</evidence>
<gene>
    <name evidence="8" type="primary">hmgA</name>
</gene>
<name>HMDH_PHYB8</name>
<comment type="function">
    <text evidence="3 10">HMG-CoA reductase; part of the first module of ergosterol biosynthesis pathway that includes the early steps of the pathway, conserved across all eukaryotes, and which results in the formation of mevalonate from acetyl-coenzyme A (acetyl-CoA) (Probable). In this module, the cytosolic acetyl-CoA acetyltransferase catalyzes the formation of acetoacetyl-CoA (By similarity). The hydroxymethylglutaryl-CoA synthase then condenses acetyl-CoA with acetoacetyl-CoA to form HMG-CoA (By similarity). The rate-limiting step of the early module is the reduction to mevalonate by the 3-hydroxy-3-methylglutaryl-coenzyme A (HMG-CoA) reductase hmgA (Probable).</text>
</comment>
<comment type="catalytic activity">
    <reaction evidence="6 10">
        <text>(R)-mevalonate + 2 NADP(+) + CoA = (3S)-3-hydroxy-3-methylglutaryl-CoA + 2 NADPH + 2 H(+)</text>
        <dbReference type="Rhea" id="RHEA:15989"/>
        <dbReference type="ChEBI" id="CHEBI:15378"/>
        <dbReference type="ChEBI" id="CHEBI:36464"/>
        <dbReference type="ChEBI" id="CHEBI:43074"/>
        <dbReference type="ChEBI" id="CHEBI:57287"/>
        <dbReference type="ChEBI" id="CHEBI:57783"/>
        <dbReference type="ChEBI" id="CHEBI:58349"/>
        <dbReference type="EC" id="1.1.1.34"/>
    </reaction>
</comment>
<comment type="pathway">
    <text evidence="10">Metabolic intermediate biosynthesis; (R)-mevalonate biosynthesis; (R)-mevalonate from acetyl-CoA: step 3/3.</text>
</comment>
<comment type="subcellular location">
    <subcellularLocation>
        <location evidence="9">Endoplasmic reticulum membrane</location>
        <topology evidence="4">Multi-pass membrane protein</topology>
    </subcellularLocation>
</comment>
<comment type="similarity">
    <text evidence="9">Belongs to the HMG-CoA reductase family.</text>
</comment>
<reference key="1">
    <citation type="submission" date="2000-07" db="EMBL/GenBank/DDBJ databases">
        <title>Genes for the metabolism of 3-hydroxy-3-methylglutaryl coenzyme A in the fungus Phycomyces.</title>
        <authorList>
            <person name="Ruiz-Albert J."/>
            <person name="Cerda-Olmedo E."/>
            <person name="Corrochano L.M."/>
        </authorList>
    </citation>
    <scope>NUCLEOTIDE SEQUENCE [GENOMIC DNA]</scope>
    <source>
        <strain>ATCC 8743b / DSM 1359 / FGSC 10004 / NBRC 33097 / NRRL 1555</strain>
    </source>
</reference>
<reference key="2">
    <citation type="journal article" date="1992" name="Exp. Mycol.">
        <title>Cloning a segment of the gene encoding 3-hydroxy-3-methyglutaryl coenzyme A reductase in Phycomyces blakesleeanus and Gibberella fujikuroi by the polymerase chain reaction.</title>
        <authorList>
            <person name="Corrochano L.M."/>
            <person name="Avalos J."/>
        </authorList>
    </citation>
    <scope>NUCLEOTIDE SEQUENCE [GENOMIC DNA] OF 836-940</scope>
    <source>
        <strain>ATCC 8743b / DSM 1359 / FGSC 10004 / NBRC 33097 / NRRL 1555</strain>
    </source>
</reference>
<proteinExistence type="inferred from homology"/>
<accession>Q12649</accession>
<protein>
    <recommendedName>
        <fullName evidence="8">3-hydroxy-3-methylglutaryl-coenzyme A reductase</fullName>
        <shortName evidence="8">HMG-CoA reductase</shortName>
        <ecNumber evidence="10">1.1.1.34</ecNumber>
    </recommendedName>
</protein>
<keyword id="KW-0256">Endoplasmic reticulum</keyword>
<keyword id="KW-0325">Glycoprotein</keyword>
<keyword id="KW-0444">Lipid biosynthesis</keyword>
<keyword id="KW-0443">Lipid metabolism</keyword>
<keyword id="KW-0472">Membrane</keyword>
<keyword id="KW-0521">NADP</keyword>
<keyword id="KW-0560">Oxidoreductase</keyword>
<keyword id="KW-0752">Steroid biosynthesis</keyword>
<keyword id="KW-0753">Steroid metabolism</keyword>
<keyword id="KW-0756">Sterol biosynthesis</keyword>
<keyword id="KW-1207">Sterol metabolism</keyword>
<keyword id="KW-0812">Transmembrane</keyword>
<keyword id="KW-1133">Transmembrane helix</keyword>
<feature type="chain" id="PRO_0000114453" description="3-hydroxy-3-methylglutaryl-coenzyme A reductase">
    <location>
        <begin position="1"/>
        <end position="1176"/>
    </location>
</feature>
<feature type="topological domain" description="Cytoplasmic" evidence="2">
    <location>
        <begin position="1"/>
        <end position="34"/>
    </location>
</feature>
<feature type="transmembrane region" description="Helical" evidence="4">
    <location>
        <begin position="35"/>
        <end position="55"/>
    </location>
</feature>
<feature type="topological domain" description="Lumenal" evidence="2">
    <location>
        <begin position="56"/>
        <end position="299"/>
    </location>
</feature>
<feature type="transmembrane region" description="Helical" evidence="4">
    <location>
        <begin position="300"/>
        <end position="320"/>
    </location>
</feature>
<feature type="topological domain" description="Cytoplasmic" evidence="2">
    <location>
        <begin position="321"/>
        <end position="330"/>
    </location>
</feature>
<feature type="transmembrane region" description="Helical" evidence="4">
    <location>
        <begin position="331"/>
        <end position="351"/>
    </location>
</feature>
<feature type="topological domain" description="Lumenal" evidence="2">
    <location>
        <begin position="352"/>
        <end position="355"/>
    </location>
</feature>
<feature type="transmembrane region" description="Helical" evidence="4">
    <location>
        <begin position="356"/>
        <end position="376"/>
    </location>
</feature>
<feature type="topological domain" description="Cytoplasmic" evidence="2">
    <location>
        <begin position="377"/>
        <end position="422"/>
    </location>
</feature>
<feature type="transmembrane region" description="Helical" evidence="4">
    <location>
        <begin position="423"/>
        <end position="443"/>
    </location>
</feature>
<feature type="topological domain" description="Lumenal" evidence="2">
    <location>
        <position position="444"/>
    </location>
</feature>
<feature type="transmembrane region" description="Helical" evidence="4">
    <location>
        <begin position="445"/>
        <end position="465"/>
    </location>
</feature>
<feature type="topological domain" description="Cytoplasmic" evidence="2">
    <location>
        <begin position="466"/>
        <end position="524"/>
    </location>
</feature>
<feature type="transmembrane region" description="Helical" evidence="4">
    <location>
        <begin position="525"/>
        <end position="545"/>
    </location>
</feature>
<feature type="topological domain" description="Lumenal" evidence="2">
    <location>
        <begin position="546"/>
        <end position="622"/>
    </location>
</feature>
<feature type="transmembrane region" description="Helical" evidence="4">
    <location>
        <begin position="623"/>
        <end position="643"/>
    </location>
</feature>
<feature type="topological domain" description="Cytoplasmic" evidence="2">
    <location>
        <begin position="644"/>
        <end position="1176"/>
    </location>
</feature>
<feature type="domain" description="SSD" evidence="5">
    <location>
        <begin position="301"/>
        <end position="465"/>
    </location>
</feature>
<feature type="region of interest" description="Disordered" evidence="7">
    <location>
        <begin position="699"/>
        <end position="724"/>
    </location>
</feature>
<feature type="region of interest" description="Disordered" evidence="7">
    <location>
        <begin position="1153"/>
        <end position="1176"/>
    </location>
</feature>
<feature type="compositionally biased region" description="Basic residues" evidence="7">
    <location>
        <begin position="700"/>
        <end position="721"/>
    </location>
</feature>
<feature type="active site" description="Charge relay system" evidence="1">
    <location>
        <position position="841"/>
    </location>
</feature>
<feature type="active site" description="Charge relay system" evidence="1">
    <location>
        <position position="972"/>
    </location>
</feature>
<feature type="active site" description="Charge relay system" evidence="1">
    <location>
        <position position="1048"/>
    </location>
</feature>
<feature type="active site" description="Proton donor" evidence="6">
    <location>
        <position position="1146"/>
    </location>
</feature>
<feature type="binding site" evidence="1">
    <location>
        <begin position="847"/>
        <end position="853"/>
    </location>
    <ligand>
        <name>CoA</name>
        <dbReference type="ChEBI" id="CHEBI:57287"/>
    </ligand>
</feature>
<feature type="binding site" evidence="1">
    <location>
        <begin position="907"/>
        <end position="909"/>
    </location>
    <ligand>
        <name>NADP(+)</name>
        <dbReference type="ChEBI" id="CHEBI:58349"/>
    </ligand>
</feature>
<feature type="binding site" evidence="1">
    <location>
        <begin position="934"/>
        <end position="942"/>
    </location>
    <ligand>
        <name>NADP(+)</name>
        <dbReference type="ChEBI" id="CHEBI:58349"/>
    </ligand>
</feature>
<feature type="binding site" evidence="1">
    <location>
        <begin position="1001"/>
        <end position="1003"/>
    </location>
    <ligand>
        <name>CoA</name>
        <dbReference type="ChEBI" id="CHEBI:57287"/>
    </ligand>
</feature>
<feature type="binding site" evidence="1">
    <location>
        <begin position="1145"/>
        <end position="1146"/>
    </location>
    <ligand>
        <name>CoA</name>
        <dbReference type="ChEBI" id="CHEBI:57287"/>
    </ligand>
</feature>
<feature type="binding site" evidence="1">
    <location>
        <begin position="1150"/>
        <end position="1151"/>
    </location>
    <ligand>
        <name>NADP(+)</name>
        <dbReference type="ChEBI" id="CHEBI:58349"/>
    </ligand>
</feature>
<feature type="glycosylation site" description="N-linked (GlcNAc...) asparagine" evidence="4">
    <location>
        <position position="224"/>
    </location>
</feature>
<feature type="glycosylation site" description="N-linked (GlcNAc...) asparagine" evidence="4">
    <location>
        <position position="238"/>
    </location>
</feature>
<feature type="glycosylation site" description="N-linked (GlcNAc...) asparagine" evidence="4">
    <location>
        <position position="553"/>
    </location>
</feature>
<feature type="glycosylation site" description="N-linked (GlcNAc...) asparagine" evidence="4">
    <location>
        <position position="596"/>
    </location>
</feature>
<organism>
    <name type="scientific">Phycomyces blakesleeanus (strain ATCC 8743b / DSM 1359 / FGSC 10004 / NBRC 33097 / NRRL 1555)</name>
    <dbReference type="NCBI Taxonomy" id="763407"/>
    <lineage>
        <taxon>Eukaryota</taxon>
        <taxon>Fungi</taxon>
        <taxon>Fungi incertae sedis</taxon>
        <taxon>Mucoromycota</taxon>
        <taxon>Mucoromycotina</taxon>
        <taxon>Mucoromycetes</taxon>
        <taxon>Mucorales</taxon>
        <taxon>Phycomycetaceae</taxon>
        <taxon>Phycomyces</taxon>
    </lineage>
</organism>
<dbReference type="EC" id="1.1.1.34" evidence="10"/>
<dbReference type="EMBL" id="X58371">
    <property type="protein sequence ID" value="CAB97179.1"/>
    <property type="molecule type" value="Genomic_DNA"/>
</dbReference>
<dbReference type="PIR" id="S17345">
    <property type="entry name" value="S17345"/>
</dbReference>
<dbReference type="SMR" id="Q12649"/>
<dbReference type="GlyCosmos" id="Q12649">
    <property type="glycosylation" value="4 sites, No reported glycans"/>
</dbReference>
<dbReference type="VEuPathDB" id="FungiDB:PHYBLDRAFT_75000"/>
<dbReference type="UniPathway" id="UPA00058">
    <property type="reaction ID" value="UER00103"/>
</dbReference>
<dbReference type="GO" id="GO:0005789">
    <property type="term" value="C:endoplasmic reticulum membrane"/>
    <property type="evidence" value="ECO:0007669"/>
    <property type="project" value="UniProtKB-SubCell"/>
</dbReference>
<dbReference type="GO" id="GO:0005778">
    <property type="term" value="C:peroxisomal membrane"/>
    <property type="evidence" value="ECO:0007669"/>
    <property type="project" value="TreeGrafter"/>
</dbReference>
<dbReference type="GO" id="GO:0004420">
    <property type="term" value="F:hydroxymethylglutaryl-CoA reductase (NADPH) activity"/>
    <property type="evidence" value="ECO:0007669"/>
    <property type="project" value="UniProtKB-EC"/>
</dbReference>
<dbReference type="GO" id="GO:0050661">
    <property type="term" value="F:NADP binding"/>
    <property type="evidence" value="ECO:0007669"/>
    <property type="project" value="InterPro"/>
</dbReference>
<dbReference type="GO" id="GO:0015936">
    <property type="term" value="P:coenzyme A metabolic process"/>
    <property type="evidence" value="ECO:0007669"/>
    <property type="project" value="InterPro"/>
</dbReference>
<dbReference type="GO" id="GO:0006696">
    <property type="term" value="P:ergosterol biosynthetic process"/>
    <property type="evidence" value="ECO:0007669"/>
    <property type="project" value="TreeGrafter"/>
</dbReference>
<dbReference type="GO" id="GO:0008299">
    <property type="term" value="P:isoprenoid biosynthetic process"/>
    <property type="evidence" value="ECO:0007669"/>
    <property type="project" value="InterPro"/>
</dbReference>
<dbReference type="CDD" id="cd00643">
    <property type="entry name" value="HMG-CoA_reductase_classI"/>
    <property type="match status" value="1"/>
</dbReference>
<dbReference type="FunFam" id="1.10.3270.10:FF:000001">
    <property type="entry name" value="3-hydroxy-3-methylglutaryl coenzyme A reductase"/>
    <property type="match status" value="1"/>
</dbReference>
<dbReference type="FunFam" id="3.30.70.420:FF:000001">
    <property type="entry name" value="3-hydroxy-3-methylglutaryl coenzyme A reductase"/>
    <property type="match status" value="1"/>
</dbReference>
<dbReference type="FunFam" id="3.90.770.10:FF:000001">
    <property type="entry name" value="3-hydroxy-3-methylglutaryl coenzyme A reductase"/>
    <property type="match status" value="1"/>
</dbReference>
<dbReference type="Gene3D" id="3.90.770.10">
    <property type="entry name" value="3-hydroxy-3-methylglutaryl-coenzyme A Reductase, Chain A, domain 2"/>
    <property type="match status" value="1"/>
</dbReference>
<dbReference type="Gene3D" id="1.10.3270.10">
    <property type="entry name" value="HMGR, N-terminal domain"/>
    <property type="match status" value="1"/>
</dbReference>
<dbReference type="Gene3D" id="3.30.70.420">
    <property type="entry name" value="Hydroxymethylglutaryl-CoA reductase, class I/II, NAD/NADP-binding domain"/>
    <property type="match status" value="1"/>
</dbReference>
<dbReference type="InterPro" id="IPR002202">
    <property type="entry name" value="HMG_CoA_Rdtase"/>
</dbReference>
<dbReference type="InterPro" id="IPR023074">
    <property type="entry name" value="HMG_CoA_Rdtase_cat_sf"/>
</dbReference>
<dbReference type="InterPro" id="IPR023076">
    <property type="entry name" value="HMG_CoA_Rdtase_CS"/>
</dbReference>
<dbReference type="InterPro" id="IPR004554">
    <property type="entry name" value="HMG_CoA_Rdtase_eu_arc"/>
</dbReference>
<dbReference type="InterPro" id="IPR004816">
    <property type="entry name" value="HMG_CoA_Rdtase_metazoan"/>
</dbReference>
<dbReference type="InterPro" id="IPR023282">
    <property type="entry name" value="HMG_CoA_Rdtase_N"/>
</dbReference>
<dbReference type="InterPro" id="IPR009023">
    <property type="entry name" value="HMG_CoA_Rdtase_NAD(P)-bd_sf"/>
</dbReference>
<dbReference type="InterPro" id="IPR009029">
    <property type="entry name" value="HMG_CoA_Rdtase_sub-bd_dom_sf"/>
</dbReference>
<dbReference type="InterPro" id="IPR053958">
    <property type="entry name" value="HMGCR/SNAP/NPC1-like_SSD"/>
</dbReference>
<dbReference type="InterPro" id="IPR000731">
    <property type="entry name" value="SSD"/>
</dbReference>
<dbReference type="NCBIfam" id="TIGR00920">
    <property type="entry name" value="2A060605"/>
    <property type="match status" value="1"/>
</dbReference>
<dbReference type="NCBIfam" id="TIGR00533">
    <property type="entry name" value="HMG_CoA_R_NADP"/>
    <property type="match status" value="1"/>
</dbReference>
<dbReference type="PANTHER" id="PTHR10572">
    <property type="entry name" value="3-HYDROXY-3-METHYLGLUTARYL-COENZYME A REDUCTASE"/>
    <property type="match status" value="1"/>
</dbReference>
<dbReference type="PANTHER" id="PTHR10572:SF24">
    <property type="entry name" value="3-HYDROXY-3-METHYLGLUTARYL-COENZYME A REDUCTASE"/>
    <property type="match status" value="1"/>
</dbReference>
<dbReference type="Pfam" id="PF00368">
    <property type="entry name" value="HMG-CoA_red"/>
    <property type="match status" value="1"/>
</dbReference>
<dbReference type="Pfam" id="PF12349">
    <property type="entry name" value="Sterol-sensing"/>
    <property type="match status" value="1"/>
</dbReference>
<dbReference type="PRINTS" id="PR00071">
    <property type="entry name" value="HMGCOARDTASE"/>
</dbReference>
<dbReference type="SUPFAM" id="SSF55035">
    <property type="entry name" value="NAD-binding domain of HMG-CoA reductase"/>
    <property type="match status" value="1"/>
</dbReference>
<dbReference type="SUPFAM" id="SSF56542">
    <property type="entry name" value="Substrate-binding domain of HMG-CoA reductase"/>
    <property type="match status" value="1"/>
</dbReference>
<dbReference type="PROSITE" id="PS00066">
    <property type="entry name" value="HMG_COA_REDUCTASE_1"/>
    <property type="match status" value="1"/>
</dbReference>
<dbReference type="PROSITE" id="PS00318">
    <property type="entry name" value="HMG_COA_REDUCTASE_2"/>
    <property type="match status" value="1"/>
</dbReference>
<dbReference type="PROSITE" id="PS01192">
    <property type="entry name" value="HMG_COA_REDUCTASE_3"/>
    <property type="match status" value="1"/>
</dbReference>
<dbReference type="PROSITE" id="PS50065">
    <property type="entry name" value="HMG_COA_REDUCTASE_4"/>
    <property type="match status" value="1"/>
</dbReference>
<dbReference type="PROSITE" id="PS50156">
    <property type="entry name" value="SSD"/>
    <property type="match status" value="1"/>
</dbReference>